<comment type="function">
    <text evidence="2">Catalyzes the intramolecular cyclization of bicyclic chalcones into tricyclic (S)-flavanones. Responsible for the isomerization of 4,2',4',6'-tetrahydroxychalcone (also termed chalcone) into naringenin.</text>
</comment>
<comment type="catalytic activity">
    <reaction>
        <text>a chalcone = a flavanone.</text>
        <dbReference type="EC" id="5.5.1.6"/>
    </reaction>
</comment>
<comment type="pathway">
    <text>Secondary metabolite biosynthesis; flavonoid biosynthesis.</text>
</comment>
<comment type="tissue specificity">
    <text evidence="2">Expressed in roots, shoots, flowers and seeds.</text>
</comment>
<comment type="induction">
    <text evidence="2">In roots by B.japonicum.</text>
</comment>
<comment type="miscellaneous">
    <text>Part of the biosynthetic pathway for all classes of flavonoids, a large class of secondary plant metabolites, many of which are brightly colored.</text>
</comment>
<comment type="similarity">
    <text evidence="3">Belongs to the chalcone isomerase family.</text>
</comment>
<comment type="sequence caution" evidence="3">
    <conflict type="miscellaneous discrepancy">
        <sequence resource="EMBL-CDS" id="ACU19979"/>
    </conflict>
    <text>Chimeric cDNA. A chimeric cDNA originating from chromosomes 19 and 20.</text>
</comment>
<organism>
    <name type="scientific">Glycine max</name>
    <name type="common">Soybean</name>
    <name type="synonym">Glycine hispida</name>
    <dbReference type="NCBI Taxonomy" id="3847"/>
    <lineage>
        <taxon>Eukaryota</taxon>
        <taxon>Viridiplantae</taxon>
        <taxon>Streptophyta</taxon>
        <taxon>Embryophyta</taxon>
        <taxon>Tracheophyta</taxon>
        <taxon>Spermatophyta</taxon>
        <taxon>Magnoliopsida</taxon>
        <taxon>eudicotyledons</taxon>
        <taxon>Gunneridae</taxon>
        <taxon>Pentapetalae</taxon>
        <taxon>rosids</taxon>
        <taxon>fabids</taxon>
        <taxon>Fabales</taxon>
        <taxon>Fabaceae</taxon>
        <taxon>Papilionoideae</taxon>
        <taxon>50 kb inversion clade</taxon>
        <taxon>NPAAA clade</taxon>
        <taxon>indigoferoid/millettioid clade</taxon>
        <taxon>Phaseoleae</taxon>
        <taxon>Glycine</taxon>
        <taxon>Glycine subgen. Soja</taxon>
    </lineage>
</organism>
<gene>
    <name type="primary">CHI1A</name>
</gene>
<proteinExistence type="evidence at transcript level"/>
<feature type="chain" id="PRO_0000300850" description="Chalcone--flavanone isomerase 1A">
    <location>
        <begin position="1"/>
        <end position="218"/>
    </location>
</feature>
<feature type="binding site" evidence="1">
    <location>
        <position position="47"/>
    </location>
    <ligand>
        <name>substrate</name>
    </ligand>
</feature>
<feature type="binding site" evidence="1">
    <location>
        <position position="112"/>
    </location>
    <ligand>
        <name>substrate</name>
    </ligand>
</feature>
<feature type="binding site" evidence="1">
    <location>
        <position position="189"/>
    </location>
    <ligand>
        <name>substrate</name>
    </ligand>
</feature>
<feature type="site" description="Important for catalytic activity" evidence="1">
    <location>
        <position position="105"/>
    </location>
</feature>
<accession>Q93XE6</accession>
<accession>C6TDS7</accession>
<name>CFI1A_SOYBN</name>
<dbReference type="EC" id="5.5.1.6"/>
<dbReference type="EMBL" id="AY595413">
    <property type="protein sequence ID" value="AAT94358.1"/>
    <property type="molecule type" value="mRNA"/>
</dbReference>
<dbReference type="EMBL" id="AF276302">
    <property type="protein sequence ID" value="AAK69432.1"/>
    <property type="molecule type" value="mRNA"/>
</dbReference>
<dbReference type="EMBL" id="DQ191401">
    <property type="protein sequence ID" value="ABA86740.1"/>
    <property type="molecule type" value="Genomic_DNA"/>
</dbReference>
<dbReference type="EMBL" id="BT095742">
    <property type="protein sequence ID" value="ACU19979.1"/>
    <property type="status" value="ALT_SEQ"/>
    <property type="molecule type" value="mRNA"/>
</dbReference>
<dbReference type="RefSeq" id="NP_001235219.1">
    <property type="nucleotide sequence ID" value="NM_001248290.2"/>
</dbReference>
<dbReference type="SMR" id="Q93XE6"/>
<dbReference type="STRING" id="3847.Q93XE6"/>
<dbReference type="PaxDb" id="3847-GLYMA20G38560.1"/>
<dbReference type="ProMEX" id="Q93XE6"/>
<dbReference type="EnsemblPlants" id="KRG92975">
    <property type="protein sequence ID" value="KRG92975"/>
    <property type="gene ID" value="GLYMA_20G241500"/>
</dbReference>
<dbReference type="GeneID" id="547602"/>
<dbReference type="Gramene" id="KRG92975">
    <property type="protein sequence ID" value="KRG92975"/>
    <property type="gene ID" value="GLYMA_20G241500"/>
</dbReference>
<dbReference type="KEGG" id="gmx:547602"/>
<dbReference type="eggNOG" id="ENOG502QR5P">
    <property type="taxonomic scope" value="Eukaryota"/>
</dbReference>
<dbReference type="InParanoid" id="Q93XE6"/>
<dbReference type="OMA" id="NCVAHLK"/>
<dbReference type="OrthoDB" id="1903537at2759"/>
<dbReference type="BRENDA" id="5.5.1.6">
    <property type="organism ID" value="2483"/>
</dbReference>
<dbReference type="UniPathway" id="UPA00154"/>
<dbReference type="Proteomes" id="UP000008827">
    <property type="component" value="Chromosome 20"/>
</dbReference>
<dbReference type="GO" id="GO:0045430">
    <property type="term" value="F:chalcone isomerase activity"/>
    <property type="evidence" value="ECO:0007669"/>
    <property type="project" value="UniProtKB-EC"/>
</dbReference>
<dbReference type="GO" id="GO:0009813">
    <property type="term" value="P:flavonoid biosynthetic process"/>
    <property type="evidence" value="ECO:0007669"/>
    <property type="project" value="UniProtKB-UniPathway"/>
</dbReference>
<dbReference type="Gene3D" id="1.10.890.20">
    <property type="match status" value="1"/>
</dbReference>
<dbReference type="Gene3D" id="3.50.70.10">
    <property type="match status" value="1"/>
</dbReference>
<dbReference type="InterPro" id="IPR044164">
    <property type="entry name" value="CFI"/>
</dbReference>
<dbReference type="InterPro" id="IPR016087">
    <property type="entry name" value="Chalcone_isomerase"/>
</dbReference>
<dbReference type="InterPro" id="IPR016088">
    <property type="entry name" value="Chalcone_isomerase_3-sand"/>
</dbReference>
<dbReference type="InterPro" id="IPR016089">
    <property type="entry name" value="Chalcone_isomerase_bundle_sf"/>
</dbReference>
<dbReference type="InterPro" id="IPR036298">
    <property type="entry name" value="Chalcone_isomerase_sf"/>
</dbReference>
<dbReference type="PANTHER" id="PTHR28039:SF10">
    <property type="entry name" value="CHALCONE--FLAVANONE ISOMERASE 1A"/>
    <property type="match status" value="1"/>
</dbReference>
<dbReference type="PANTHER" id="PTHR28039">
    <property type="entry name" value="CHALCONE--FLAVONONE ISOMERASE 1-RELATED"/>
    <property type="match status" value="1"/>
</dbReference>
<dbReference type="Pfam" id="PF02431">
    <property type="entry name" value="Chalcone"/>
    <property type="match status" value="1"/>
</dbReference>
<dbReference type="SUPFAM" id="SSF54626">
    <property type="entry name" value="Chalcone isomerase"/>
    <property type="match status" value="1"/>
</dbReference>
<evidence type="ECO:0000250" key="1"/>
<evidence type="ECO:0000269" key="2">
    <source>
    </source>
</evidence>
<evidence type="ECO:0000305" key="3"/>
<keyword id="KW-0284">Flavonoid biosynthesis</keyword>
<keyword id="KW-0413">Isomerase</keyword>
<keyword id="KW-1185">Reference proteome</keyword>
<protein>
    <recommendedName>
        <fullName>Chalcone--flavanone isomerase 1A</fullName>
        <shortName>Chalcone isomerase 1A</shortName>
        <ecNumber>5.5.1.6</ecNumber>
    </recommendedName>
</protein>
<reference key="1">
    <citation type="journal article" date="2005" name="Plant Physiol.">
        <title>Partial reconstruction of flavonoid and isoflavonoid biosynthesis in yeast using soybean type I and type II chalcone isomerases.</title>
        <authorList>
            <person name="Ralston L."/>
            <person name="Subramanian S."/>
            <person name="Matsuno M."/>
            <person name="Yu O."/>
        </authorList>
    </citation>
    <scope>NUCLEOTIDE SEQUENCE [MRNA]</scope>
    <scope>FUNCTION</scope>
    <scope>INDUCTION</scope>
    <scope>TISSUE SPECIFICITY</scope>
</reference>
<reference key="2">
    <citation type="submission" date="2000-06" db="EMBL/GenBank/DDBJ databases">
        <title>Glycine max mRNA for chalcone isomerase.</title>
        <authorList>
            <person name="Chiu M.J."/>
            <person name="Chen S."/>
            <person name="Wang C."/>
        </authorList>
    </citation>
    <scope>NUCLEOTIDE SEQUENCE [MRNA]</scope>
    <source>
        <strain>cv. Ching-Ren-Woo-Dou</strain>
        <tissue>Seed coat</tissue>
    </source>
</reference>
<reference key="3">
    <citation type="submission" date="2005-09" db="EMBL/GenBank/DDBJ databases">
        <title>Molecular cloning of genes encoding two types of chalcone isomerase in soybean (Glycine max).</title>
        <authorList>
            <person name="Liao R.-M."/>
            <person name="Chiu M.-H."/>
            <person name="Chen S.-H."/>
            <person name="Chu T.-M."/>
            <person name="Wang C.-S."/>
        </authorList>
    </citation>
    <scope>NUCLEOTIDE SEQUENCE [GENOMIC DNA]</scope>
    <source>
        <strain>cv. L66-14</strain>
    </source>
</reference>
<reference key="4">
    <citation type="submission" date="2009-08" db="EMBL/GenBank/DDBJ databases">
        <authorList>
            <person name="Cheung F."/>
            <person name="Xiao Y."/>
            <person name="Chan A."/>
            <person name="Moskal W."/>
            <person name="Town C.D."/>
        </authorList>
    </citation>
    <scope>NUCLEOTIDE SEQUENCE [LARGE SCALE MRNA]</scope>
</reference>
<sequence>MATISAVQVEFLEFPAVVTSPASGKTYFLGGAGERGLTIEGKFIKFTGIGVYLEDKAVPSLAAKWKGKTSEELVHTLHFYRDIISGPFEKLIRGSKILPLAGAEYSKKVMENCVAHMKSVGTYGDAEAAAIEKFAEAFKNVNFAPGASVFYRQSPDGILGLSFSEDATIPEKEAAVIENKAVSAAVLETMIGEHAVSPDLKRSLASRLPAVLSHGIIV</sequence>